<keyword id="KW-0002">3D-structure</keyword>
<keyword id="KW-0007">Acetylation</keyword>
<keyword id="KW-0025">Alternative splicing</keyword>
<keyword id="KW-0030">Aminoacyl-tRNA synthetase</keyword>
<keyword id="KW-0067">ATP-binding</keyword>
<keyword id="KW-0963">Cytoplasm</keyword>
<keyword id="KW-0225">Disease variant</keyword>
<keyword id="KW-0436">Ligase</keyword>
<keyword id="KW-0547">Nucleotide-binding</keyword>
<keyword id="KW-0597">Phosphoprotein</keyword>
<keyword id="KW-0648">Protein biosynthesis</keyword>
<keyword id="KW-1267">Proteomics identification</keyword>
<keyword id="KW-1185">Reference proteome</keyword>
<organism>
    <name type="scientific">Homo sapiens</name>
    <name type="common">Human</name>
    <dbReference type="NCBI Taxonomy" id="9606"/>
    <lineage>
        <taxon>Eukaryota</taxon>
        <taxon>Metazoa</taxon>
        <taxon>Chordata</taxon>
        <taxon>Craniata</taxon>
        <taxon>Vertebrata</taxon>
        <taxon>Euteleostomi</taxon>
        <taxon>Mammalia</taxon>
        <taxon>Eutheria</taxon>
        <taxon>Euarchontoglires</taxon>
        <taxon>Primates</taxon>
        <taxon>Haplorrhini</taxon>
        <taxon>Catarrhini</taxon>
        <taxon>Hominidae</taxon>
        <taxon>Homo</taxon>
    </lineage>
</organism>
<evidence type="ECO:0000250" key="1"/>
<evidence type="ECO:0000250" key="2">
    <source>
        <dbReference type="UniProtKB" id="Q8BMJ2"/>
    </source>
</evidence>
<evidence type="ECO:0000269" key="3">
    <source>
    </source>
</evidence>
<evidence type="ECO:0000269" key="4">
    <source>
    </source>
</evidence>
<evidence type="ECO:0000269" key="5">
    <source>
    </source>
</evidence>
<evidence type="ECO:0000269" key="6">
    <source>
    </source>
</evidence>
<evidence type="ECO:0000269" key="7">
    <source ref="1"/>
</evidence>
<evidence type="ECO:0000303" key="8">
    <source>
    </source>
</evidence>
<evidence type="ECO:0000303" key="9">
    <source>
    </source>
</evidence>
<evidence type="ECO:0000303" key="10">
    <source>
    </source>
</evidence>
<evidence type="ECO:0000303" key="11">
    <source>
    </source>
</evidence>
<evidence type="ECO:0000305" key="12"/>
<evidence type="ECO:0000305" key="13">
    <source>
    </source>
</evidence>
<evidence type="ECO:0000305" key="14">
    <source>
    </source>
</evidence>
<evidence type="ECO:0000312" key="15">
    <source>
        <dbReference type="HGNC" id="HGNC:6512"/>
    </source>
</evidence>
<evidence type="ECO:0007744" key="16">
    <source>
        <dbReference type="PDB" id="6LPF"/>
    </source>
</evidence>
<evidence type="ECO:0007744" key="17">
    <source>
    </source>
</evidence>
<evidence type="ECO:0007829" key="18">
    <source>
        <dbReference type="PDB" id="2WFD"/>
    </source>
</evidence>
<evidence type="ECO:0007829" key="19">
    <source>
        <dbReference type="PDB" id="6KID"/>
    </source>
</evidence>
<evidence type="ECO:0007829" key="20">
    <source>
        <dbReference type="PDB" id="6KIE"/>
    </source>
</evidence>
<evidence type="ECO:0007829" key="21">
    <source>
        <dbReference type="PDB" id="6KQY"/>
    </source>
</evidence>
<evidence type="ECO:0007829" key="22">
    <source>
        <dbReference type="PDB" id="6LPF"/>
    </source>
</evidence>
<evidence type="ECO:0007829" key="23">
    <source>
        <dbReference type="PDB" id="6LR6"/>
    </source>
</evidence>
<gene>
    <name evidence="15" type="primary">LARS1</name>
    <name type="synonym">KIAA1352</name>
    <name type="synonym">LARS</name>
</gene>
<name>SYLC_HUMAN</name>
<accession>Q9P2J5</accession>
<accession>A2RRR4</accession>
<accession>A7E266</accession>
<accession>B4DJ10</accession>
<accession>Q2TU79</accession>
<accession>Q9NSE1</accession>
<reference key="1">
    <citation type="submission" date="1996-03" db="EMBL/GenBank/DDBJ databases">
        <title>Cloning and sequence determination of a human cytoplasmic leucyl-tRNA synthetase gene.</title>
        <authorList>
            <person name="Motegi H."/>
            <person name="Noda T."/>
            <person name="Shiba K."/>
        </authorList>
    </citation>
    <scope>NUCLEOTIDE SEQUENCE [MRNA] (ISOFORM 1)</scope>
    <scope>VARIANT LYS-1088</scope>
    <source>
        <tissue>Brain</tissue>
    </source>
</reference>
<reference key="2">
    <citation type="journal article" date="2000" name="DNA Res.">
        <title>Prediction of the coding sequences of unidentified human genes. XVI. The complete sequences of 150 new cDNA clones from brain which code for large proteins in vitro.</title>
        <authorList>
            <person name="Nagase T."/>
            <person name="Kikuno R."/>
            <person name="Ishikawa K."/>
            <person name="Hirosawa M."/>
            <person name="Ohara O."/>
        </authorList>
    </citation>
    <scope>NUCLEOTIDE SEQUENCE [LARGE SCALE MRNA] (ISOFORM 1)</scope>
    <source>
        <tissue>Brain</tissue>
    </source>
</reference>
<reference key="3">
    <citation type="journal article" date="2004" name="Nat. Genet.">
        <title>Complete sequencing and characterization of 21,243 full-length human cDNAs.</title>
        <authorList>
            <person name="Ota T."/>
            <person name="Suzuki Y."/>
            <person name="Nishikawa T."/>
            <person name="Otsuki T."/>
            <person name="Sugiyama T."/>
            <person name="Irie R."/>
            <person name="Wakamatsu A."/>
            <person name="Hayashi K."/>
            <person name="Sato H."/>
            <person name="Nagai K."/>
            <person name="Kimura K."/>
            <person name="Makita H."/>
            <person name="Sekine M."/>
            <person name="Obayashi M."/>
            <person name="Nishi T."/>
            <person name="Shibahara T."/>
            <person name="Tanaka T."/>
            <person name="Ishii S."/>
            <person name="Yamamoto J."/>
            <person name="Saito K."/>
            <person name="Kawai Y."/>
            <person name="Isono Y."/>
            <person name="Nakamura Y."/>
            <person name="Nagahari K."/>
            <person name="Murakami K."/>
            <person name="Yasuda T."/>
            <person name="Iwayanagi T."/>
            <person name="Wagatsuma M."/>
            <person name="Shiratori A."/>
            <person name="Sudo H."/>
            <person name="Hosoiri T."/>
            <person name="Kaku Y."/>
            <person name="Kodaira H."/>
            <person name="Kondo H."/>
            <person name="Sugawara M."/>
            <person name="Takahashi M."/>
            <person name="Kanda K."/>
            <person name="Yokoi T."/>
            <person name="Furuya T."/>
            <person name="Kikkawa E."/>
            <person name="Omura Y."/>
            <person name="Abe K."/>
            <person name="Kamihara K."/>
            <person name="Katsuta N."/>
            <person name="Sato K."/>
            <person name="Tanikawa M."/>
            <person name="Yamazaki M."/>
            <person name="Ninomiya K."/>
            <person name="Ishibashi T."/>
            <person name="Yamashita H."/>
            <person name="Murakawa K."/>
            <person name="Fujimori K."/>
            <person name="Tanai H."/>
            <person name="Kimata M."/>
            <person name="Watanabe M."/>
            <person name="Hiraoka S."/>
            <person name="Chiba Y."/>
            <person name="Ishida S."/>
            <person name="Ono Y."/>
            <person name="Takiguchi S."/>
            <person name="Watanabe S."/>
            <person name="Yosida M."/>
            <person name="Hotuta T."/>
            <person name="Kusano J."/>
            <person name="Kanehori K."/>
            <person name="Takahashi-Fujii A."/>
            <person name="Hara H."/>
            <person name="Tanase T.-O."/>
            <person name="Nomura Y."/>
            <person name="Togiya S."/>
            <person name="Komai F."/>
            <person name="Hara R."/>
            <person name="Takeuchi K."/>
            <person name="Arita M."/>
            <person name="Imose N."/>
            <person name="Musashino K."/>
            <person name="Yuuki H."/>
            <person name="Oshima A."/>
            <person name="Sasaki N."/>
            <person name="Aotsuka S."/>
            <person name="Yoshikawa Y."/>
            <person name="Matsunawa H."/>
            <person name="Ichihara T."/>
            <person name="Shiohata N."/>
            <person name="Sano S."/>
            <person name="Moriya S."/>
            <person name="Momiyama H."/>
            <person name="Satoh N."/>
            <person name="Takami S."/>
            <person name="Terashima Y."/>
            <person name="Suzuki O."/>
            <person name="Nakagawa S."/>
            <person name="Senoh A."/>
            <person name="Mizoguchi H."/>
            <person name="Goto Y."/>
            <person name="Shimizu F."/>
            <person name="Wakebe H."/>
            <person name="Hishigaki H."/>
            <person name="Watanabe T."/>
            <person name="Sugiyama A."/>
            <person name="Takemoto M."/>
            <person name="Kawakami B."/>
            <person name="Yamazaki M."/>
            <person name="Watanabe K."/>
            <person name="Kumagai A."/>
            <person name="Itakura S."/>
            <person name="Fukuzumi Y."/>
            <person name="Fujimori Y."/>
            <person name="Komiyama M."/>
            <person name="Tashiro H."/>
            <person name="Tanigami A."/>
            <person name="Fujiwara T."/>
            <person name="Ono T."/>
            <person name="Yamada K."/>
            <person name="Fujii Y."/>
            <person name="Ozaki K."/>
            <person name="Hirao M."/>
            <person name="Ohmori Y."/>
            <person name="Kawabata A."/>
            <person name="Hikiji T."/>
            <person name="Kobatake N."/>
            <person name="Inagaki H."/>
            <person name="Ikema Y."/>
            <person name="Okamoto S."/>
            <person name="Okitani R."/>
            <person name="Kawakami T."/>
            <person name="Noguchi S."/>
            <person name="Itoh T."/>
            <person name="Shigeta K."/>
            <person name="Senba T."/>
            <person name="Matsumura K."/>
            <person name="Nakajima Y."/>
            <person name="Mizuno T."/>
            <person name="Morinaga M."/>
            <person name="Sasaki M."/>
            <person name="Togashi T."/>
            <person name="Oyama M."/>
            <person name="Hata H."/>
            <person name="Watanabe M."/>
            <person name="Komatsu T."/>
            <person name="Mizushima-Sugano J."/>
            <person name="Satoh T."/>
            <person name="Shirai Y."/>
            <person name="Takahashi Y."/>
            <person name="Nakagawa K."/>
            <person name="Okumura K."/>
            <person name="Nagase T."/>
            <person name="Nomura N."/>
            <person name="Kikuchi H."/>
            <person name="Masuho Y."/>
            <person name="Yamashita R."/>
            <person name="Nakai K."/>
            <person name="Yada T."/>
            <person name="Nakamura Y."/>
            <person name="Ohara O."/>
            <person name="Isogai T."/>
            <person name="Sugano S."/>
        </authorList>
    </citation>
    <scope>NUCLEOTIDE SEQUENCE [LARGE SCALE MRNA] (ISOFORM 2)</scope>
    <source>
        <tissue>Hippocampus</tissue>
    </source>
</reference>
<reference key="4">
    <citation type="submission" date="2005-02" db="EMBL/GenBank/DDBJ databases">
        <title>Identification of a human cell proliferation gene.</title>
        <authorList>
            <person name="Kim J.W."/>
            <person name="Kim H.K."/>
            <person name="Shin S.M."/>
        </authorList>
    </citation>
    <scope>NUCLEOTIDE SEQUENCE [LARGE SCALE MRNA] (ISOFORM 3)</scope>
</reference>
<reference key="5">
    <citation type="journal article" date="2004" name="Nature">
        <title>The DNA sequence and comparative analysis of human chromosome 5.</title>
        <authorList>
            <person name="Schmutz J."/>
            <person name="Martin J."/>
            <person name="Terry A."/>
            <person name="Couronne O."/>
            <person name="Grimwood J."/>
            <person name="Lowry S."/>
            <person name="Gordon L.A."/>
            <person name="Scott D."/>
            <person name="Xie G."/>
            <person name="Huang W."/>
            <person name="Hellsten U."/>
            <person name="Tran-Gyamfi M."/>
            <person name="She X."/>
            <person name="Prabhakar S."/>
            <person name="Aerts A."/>
            <person name="Altherr M."/>
            <person name="Bajorek E."/>
            <person name="Black S."/>
            <person name="Branscomb E."/>
            <person name="Caoile C."/>
            <person name="Challacombe J.F."/>
            <person name="Chan Y.M."/>
            <person name="Denys M."/>
            <person name="Detter J.C."/>
            <person name="Escobar J."/>
            <person name="Flowers D."/>
            <person name="Fotopulos D."/>
            <person name="Glavina T."/>
            <person name="Gomez M."/>
            <person name="Gonzales E."/>
            <person name="Goodstein D."/>
            <person name="Grigoriev I."/>
            <person name="Groza M."/>
            <person name="Hammon N."/>
            <person name="Hawkins T."/>
            <person name="Haydu L."/>
            <person name="Israni S."/>
            <person name="Jett J."/>
            <person name="Kadner K."/>
            <person name="Kimball H."/>
            <person name="Kobayashi A."/>
            <person name="Lopez F."/>
            <person name="Lou Y."/>
            <person name="Martinez D."/>
            <person name="Medina C."/>
            <person name="Morgan J."/>
            <person name="Nandkeshwar R."/>
            <person name="Noonan J.P."/>
            <person name="Pitluck S."/>
            <person name="Pollard M."/>
            <person name="Predki P."/>
            <person name="Priest J."/>
            <person name="Ramirez L."/>
            <person name="Retterer J."/>
            <person name="Rodriguez A."/>
            <person name="Rogers S."/>
            <person name="Salamov A."/>
            <person name="Salazar A."/>
            <person name="Thayer N."/>
            <person name="Tice H."/>
            <person name="Tsai M."/>
            <person name="Ustaszewska A."/>
            <person name="Vo N."/>
            <person name="Wheeler J."/>
            <person name="Wu K."/>
            <person name="Yang J."/>
            <person name="Dickson M."/>
            <person name="Cheng J.-F."/>
            <person name="Eichler E.E."/>
            <person name="Olsen A."/>
            <person name="Pennacchio L.A."/>
            <person name="Rokhsar D.S."/>
            <person name="Richardson P."/>
            <person name="Lucas S.M."/>
            <person name="Myers R.M."/>
            <person name="Rubin E.M."/>
        </authorList>
    </citation>
    <scope>NUCLEOTIDE SEQUENCE [LARGE SCALE GENOMIC DNA]</scope>
</reference>
<reference key="6">
    <citation type="submission" date="2005-09" db="EMBL/GenBank/DDBJ databases">
        <authorList>
            <person name="Mural R.J."/>
            <person name="Istrail S."/>
            <person name="Sutton G.G."/>
            <person name="Florea L."/>
            <person name="Halpern A.L."/>
            <person name="Mobarry C.M."/>
            <person name="Lippert R."/>
            <person name="Walenz B."/>
            <person name="Shatkay H."/>
            <person name="Dew I."/>
            <person name="Miller J.R."/>
            <person name="Flanigan M.J."/>
            <person name="Edwards N.J."/>
            <person name="Bolanos R."/>
            <person name="Fasulo D."/>
            <person name="Halldorsson B.V."/>
            <person name="Hannenhalli S."/>
            <person name="Turner R."/>
            <person name="Yooseph S."/>
            <person name="Lu F."/>
            <person name="Nusskern D.R."/>
            <person name="Shue B.C."/>
            <person name="Zheng X.H."/>
            <person name="Zhong F."/>
            <person name="Delcher A.L."/>
            <person name="Huson D.H."/>
            <person name="Kravitz S.A."/>
            <person name="Mouchard L."/>
            <person name="Reinert K."/>
            <person name="Remington K.A."/>
            <person name="Clark A.G."/>
            <person name="Waterman M.S."/>
            <person name="Eichler E.E."/>
            <person name="Adams M.D."/>
            <person name="Hunkapiller M.W."/>
            <person name="Myers E.W."/>
            <person name="Venter J.C."/>
        </authorList>
    </citation>
    <scope>NUCLEOTIDE SEQUENCE [LARGE SCALE GENOMIC DNA]</scope>
</reference>
<reference key="7">
    <citation type="journal article" date="2004" name="Genome Res.">
        <title>The status, quality, and expansion of the NIH full-length cDNA project: the Mammalian Gene Collection (MGC).</title>
        <authorList>
            <consortium name="The MGC Project Team"/>
        </authorList>
    </citation>
    <scope>NUCLEOTIDE SEQUENCE [LARGE SCALE MRNA] (ISOFORMS 1 AND 3)</scope>
</reference>
<reference key="8">
    <citation type="journal article" date="2011" name="BMC Syst. Biol.">
        <title>Initial characterization of the human central proteome.</title>
        <authorList>
            <person name="Burkard T.R."/>
            <person name="Planyavsky M."/>
            <person name="Kaupe I."/>
            <person name="Breitwieser F.P."/>
            <person name="Buerckstuemmer T."/>
            <person name="Bennett K.L."/>
            <person name="Superti-Furga G."/>
            <person name="Colinge J."/>
        </authorList>
    </citation>
    <scope>IDENTIFICATION BY MASS SPECTROMETRY [LARGE SCALE ANALYSIS]</scope>
</reference>
<reference key="9">
    <citation type="journal article" date="2013" name="J. Proteome Res.">
        <title>Toward a comprehensive characterization of a human cancer cell phosphoproteome.</title>
        <authorList>
            <person name="Zhou H."/>
            <person name="Di Palma S."/>
            <person name="Preisinger C."/>
            <person name="Peng M."/>
            <person name="Polat A.N."/>
            <person name="Heck A.J."/>
            <person name="Mohammed S."/>
        </authorList>
    </citation>
    <scope>PHOSPHORYLATION [LARGE SCALE ANALYSIS] AT SER-167 AND SER-720</scope>
    <scope>IDENTIFICATION BY MASS SPECTROMETRY [LARGE SCALE ANALYSIS]</scope>
    <source>
        <tissue>Erythroleukemia</tissue>
    </source>
</reference>
<reference key="10">
    <citation type="journal article" date="2014" name="J. Proteomics">
        <title>An enzyme assisted RP-RPLC approach for in-depth analysis of human liver phosphoproteome.</title>
        <authorList>
            <person name="Bian Y."/>
            <person name="Song C."/>
            <person name="Cheng K."/>
            <person name="Dong M."/>
            <person name="Wang F."/>
            <person name="Huang J."/>
            <person name="Sun D."/>
            <person name="Wang L."/>
            <person name="Ye M."/>
            <person name="Zou H."/>
        </authorList>
    </citation>
    <scope>IDENTIFICATION BY MASS SPECTROMETRY [LARGE SCALE ANALYSIS]</scope>
    <source>
        <tissue>Liver</tissue>
    </source>
</reference>
<reference key="11">
    <citation type="journal article" date="2014" name="RNA">
        <title>A bridge between the aminoacylation and editing domains of leucyl-tRNA synthetase is crucial for its synthetic activity.</title>
        <authorList>
            <person name="Huang Q."/>
            <person name="Zhou X.L."/>
            <person name="Hu Q.H."/>
            <person name="Lei H.Y."/>
            <person name="Fang Z.P."/>
            <person name="Yao P."/>
            <person name="Wang E.D."/>
        </authorList>
    </citation>
    <scope>FUNCTION</scope>
    <scope>CATALYTIC ACTIVITY</scope>
    <scope>MUTAGENESIS OF 236-ARG--GLY-256; PRO-242; GLY-245; PRO-247; ASP-250; 514-VAL--TYR-534; SER-519; VAL-523; ALA-525 AND CYS-527</scope>
</reference>
<reference key="12">
    <citation type="journal article" date="2015" name="Proteomics">
        <title>N-terminome analysis of the human mitochondrial proteome.</title>
        <authorList>
            <person name="Vaca Jacome A.S."/>
            <person name="Rabilloud T."/>
            <person name="Schaeffer-Reiss C."/>
            <person name="Rompais M."/>
            <person name="Ayoub D."/>
            <person name="Lane L."/>
            <person name="Bairoch A."/>
            <person name="Van Dorsselaer A."/>
            <person name="Carapito C."/>
        </authorList>
    </citation>
    <scope>IDENTIFICATION BY MASS SPECTROMETRY [LARGE SCALE ANALYSIS]</scope>
</reference>
<reference key="13">
    <citation type="journal article" date="2009" name="J. Mol. Biol.">
        <title>Crystal structures of the human and fungal cytosolic Leucyl-tRNA synthetase editing domains: A structural basis for the rational design of antifungal benzoxaboroles.</title>
        <authorList>
            <person name="Seiradake E."/>
            <person name="Mao W."/>
            <person name="Hernandez V."/>
            <person name="Baker S.J."/>
            <person name="Plattner J.J."/>
            <person name="Alley M.R.K."/>
            <person name="Cusack S."/>
        </authorList>
    </citation>
    <scope>X-RAY CRYSTALLOGRAPHY (3.25 ANGSTROMS) OF 260-509 IN COMPLEX WITH SYNTHETIC INHIBITOR AND AMP</scope>
    <scope>FUNCTION</scope>
</reference>
<reference key="14">
    <citation type="journal article" date="2020" name="Nucleic Acids Res.">
        <title>Molecular basis of the multifaceted functions of human leucyl-tRNA synthetase in protein synthesis and beyond.</title>
        <authorList>
            <person name="Liu R.J."/>
            <person name="Long T."/>
            <person name="Li H."/>
            <person name="Zhao J."/>
            <person name="Li J."/>
            <person name="Wang M."/>
            <person name="Palencia A."/>
            <person name="Lin J."/>
            <person name="Cusack S."/>
            <person name="Wang E.D."/>
        </authorList>
    </citation>
    <scope>X-RAY CRYSTALLOGRAPHY (2.49 ANGSTROMS) OF 1-1070 IN COMPLEX WITH LEUCINE ANALOG</scope>
    <scope>FUNCTION</scope>
    <scope>DOMAIN</scope>
    <scope>SUBUNIT</scope>
</reference>
<reference key="15">
    <citation type="journal article" date="2012" name="Mol. Genet. Metab.">
        <title>Identification of a mutation in LARS as a novel cause of infantile hepatopathy.</title>
        <authorList>
            <person name="Casey J.P."/>
            <person name="McGettigan P."/>
            <person name="Lynam-Lennon N."/>
            <person name="McDermott M."/>
            <person name="Regan R."/>
            <person name="Conroy J."/>
            <person name="Bourke B."/>
            <person name="O'Sullivan J."/>
            <person name="Crushell E."/>
            <person name="Lynch S."/>
            <person name="Ennis S."/>
        </authorList>
    </citation>
    <scope>VARIANT ILFS1 CYS-373</scope>
    <scope>VARIANT ARG-82</scope>
</reference>
<comment type="function">
    <text evidence="3 5 6">Aminoacyl-tRNA synthetase that catalyzes the specific attachment of leucine to its cognate tRNA (tRNA(Leu)) (PubMed:25051973, PubMed:32232361). It performs tRNA aminoacylation in a two-step reaction: Leu is initially activated by ATP to form a leucyl-adenylate (Leu-AMP) intermediate; then the leucyl moiety is transferred to the acceptor 3' end of the tRNA to yield leucyl-tRNA (PubMed:25051973). To improve the fidelity of catalytic reactions, it is also able to hydrolyze misactivated aminoacyl-adenylate intermediates (pre-transfer editing) and mischarged aminoacyl-tRNAs (post-transfer editing) (PubMed:25051973).</text>
</comment>
<comment type="catalytic activity">
    <reaction evidence="5">
        <text>tRNA(Leu) + L-leucine + ATP = L-leucyl-tRNA(Leu) + AMP + diphosphate</text>
        <dbReference type="Rhea" id="RHEA:11688"/>
        <dbReference type="Rhea" id="RHEA-COMP:9613"/>
        <dbReference type="Rhea" id="RHEA-COMP:9622"/>
        <dbReference type="ChEBI" id="CHEBI:30616"/>
        <dbReference type="ChEBI" id="CHEBI:33019"/>
        <dbReference type="ChEBI" id="CHEBI:57427"/>
        <dbReference type="ChEBI" id="CHEBI:78442"/>
        <dbReference type="ChEBI" id="CHEBI:78494"/>
        <dbReference type="ChEBI" id="CHEBI:456215"/>
        <dbReference type="EC" id="6.1.1.4"/>
    </reaction>
    <physiologicalReaction direction="left-to-right" evidence="12">
        <dbReference type="Rhea" id="RHEA:11689"/>
    </physiologicalReaction>
</comment>
<comment type="catalytic activity">
    <reaction evidence="5">
        <text>L-methionyl-tRNA(Leu) + H2O = tRNA(Leu) + L-methionine + H(+)</text>
        <dbReference type="Rhea" id="RHEA:77535"/>
        <dbReference type="Rhea" id="RHEA-COMP:9613"/>
        <dbReference type="Rhea" id="RHEA-COMP:18931"/>
        <dbReference type="ChEBI" id="CHEBI:15377"/>
        <dbReference type="ChEBI" id="CHEBI:15378"/>
        <dbReference type="ChEBI" id="CHEBI:57844"/>
        <dbReference type="ChEBI" id="CHEBI:78442"/>
        <dbReference type="ChEBI" id="CHEBI:78530"/>
    </reaction>
    <physiologicalReaction direction="left-to-right" evidence="5">
        <dbReference type="Rhea" id="RHEA:77536"/>
    </physiologicalReaction>
</comment>
<comment type="activity regulation">
    <text>5-fluoro-1,3-dihydro-1-hydroxy-1,2-benzoxaborole inhibits LARS1 by forming a covalent adduct with the 3' adenosine of tRNA(Leu) at the editing site, thus locking the enzyme in an inactive conformation.</text>
</comment>
<comment type="subunit">
    <text evidence="6">Part of the aminoacyl-tRNA synthetase multienzyme complex, also known as multisynthetase complex (MSC), that is composed of the aminoacyl-tRNA ligases for Arg (RARS1), Asp (DARS1), Gln (QARS1), Ile (IARS1), Leu (LARS1), Lys (KARS1), Met (MARS1) the bifunctional ligase for Glu and Pro (EPRS1) and the auxiliary subunits AIMP1/p43, AIMP2/p38 and EEF1E1/p18.</text>
</comment>
<comment type="interaction">
    <interactant intactId="EBI-356077">
        <id>Q9P2J5</id>
    </interactant>
    <interactant intactId="EBI-355482">
        <id>P54136</id>
        <label>RARS1</label>
    </interactant>
    <organismsDiffer>false</organismsDiffer>
    <experiments>6</experiments>
</comment>
<comment type="interaction">
    <interactant intactId="EBI-356077">
        <id>Q9P2J5</id>
    </interactant>
    <interactant intactId="EBI-1567928">
        <id>Q8N122</id>
        <label>RPTOR</label>
    </interactant>
    <organismsDiffer>false</organismsDiffer>
    <experiments>3</experiments>
</comment>
<comment type="interaction">
    <interactant intactId="EBI-356077">
        <id>Q9P2J5</id>
    </interactant>
    <interactant intactId="EBI-992949">
        <id>Q9NQL2</id>
        <label>RRAGD</label>
    </interactant>
    <organismsDiffer>false</organismsDiffer>
    <experiments>13</experiments>
</comment>
<comment type="subcellular location">
    <subcellularLocation>
        <location evidence="1">Cytoplasm</location>
    </subcellularLocation>
</comment>
<comment type="alternative products">
    <event type="alternative splicing"/>
    <isoform>
        <id>Q9P2J5-1</id>
        <name>1</name>
        <sequence type="displayed"/>
    </isoform>
    <isoform>
        <id>Q9P2J5-2</id>
        <name>2</name>
        <sequence type="described" ref="VSP_057205"/>
    </isoform>
    <isoform>
        <id>Q9P2J5-3</id>
        <name>3</name>
        <sequence type="described" ref="VSP_057204"/>
    </isoform>
</comment>
<comment type="domain">
    <text evidence="6">The structure of cytoplasmic leucine-tRNA ligase includes four main functional domains: the Rossmann-fold aminoacylation domain, the editing domain known as connective peptide 1 (CP1), the anticodon binding domain for tRNA recognition, and the vertebrate C-terminal (VC) domain for tRNA binding.</text>
</comment>
<comment type="disease" evidence="4">
    <disease id="DI-03895">
        <name>Infantile liver failure syndrome 1</name>
        <acronym>ILFS1</acronym>
        <description>A life-threatening disorder of hepatic function that manifests with acute liver failure in the first few months of life. Clinical features include anemia, renal tubulopathy, developmental delay, seizures, failure to thrive, and liver steatosis and fibrosis.</description>
        <dbReference type="MIM" id="615438"/>
    </disease>
    <text>The disease is caused by variants affecting the gene represented in this entry.</text>
</comment>
<comment type="similarity">
    <text evidence="12">Belongs to the class-I aminoacyl-tRNA synthetase family.</text>
</comment>
<comment type="sequence caution" evidence="12">
    <conflict type="erroneous initiation">
        <sequence resource="EMBL-CDS" id="BAA92590"/>
    </conflict>
    <text>Extended N-terminus.</text>
</comment>
<proteinExistence type="evidence at protein level"/>
<sequence length="1176" mass="134466">MAERKGTAKVDFLKKIEKEIQQKWDTERVFEVNASNLEKQTSKGKYFVTFPYPYMNGRLHLGHTFSLSKCEFAVGYQRLKGKCCLFPFGLHCTGMPIKACADKLKREIELYGCPPDFPDEEEEEEETSVKTEDIIIKDKAKGKKSKAAAKAGSSKYQWGIMKSLGLSDEEIVKFSEAEHWLDYFPPLAIQDLKRMGLKVDWRRSFITTDVNPYYDSFVRWQFLTLRERNKIKFGKRYTIYSPKDGQPCMDHDRQTGEGVGPQEYTLLKLKVLEPYPSKLSGLKGKNIFLVAATLRPETMFGQTNCWVRPDMKYIGFETVNGDIFICTQKAARNMSYQGFTKDNGVVPVVKELMGEEILGASLSAPLTSYKVIYVLPMLTIKEDKGTGVVTSVPSDSPDDIAALRDLKKKQALRAKYGIRDDMVLPFEPVPVIEIPGFGNLSAVTICDELKIQSQNDREKLAEAKEKIYLKGFYEGIMLVDGFKGQKVQDVKKTIQKKMIDAGDALIYMEPEKQVMSRSSDECVVALCDQWYLDYGEENWKKQTSQCLKNLETFCEETRRNFEATLGWLQEHACSRTYGLGTHLPWDEQWLIESLSDSTIYMAFYTVAHLLQGGNLHGQAESPLGIRPQQMTKEVWDYVFFKEAPFPKTQIAKEKLDQLKQEFEFWYPVDLRVSGKDLVPNHLSYYLYNHVAMWPEQSDKWPTAVRANGHLLLNSEKMSKSTGNFLTLTQAIDKFSADGMRLALADAGDTVEDANFVEAMADAGILRLYTWVEWVKEMVANWDSLRSGPASTFNDRVFASELNAGIIKTDQNYEKMMFKEALKTGFFEFQAAKDKYRELAVEGMHRELVFRFIEVQTLLLAPFCPHLCEHIWTLLGKPDSIMNASWPVAGPVNEVLIHSSQYLMEVTHDLRLRLKNYMMPAKGKKTDKQPLQKPSHCTIYVAKNYPPWQHTTLSVLRKHFEANNGKLPDNKVIASELGSMPELKKYMKKVMPFVAMIKENLEKMGPRILDLQLEFDEKAVLMENIVYLTNSLELEHIEVKFASEAEDKIREDCCPGKPLNVFRIEPGVSVSLVNPQPSNGHFSTKIEIRQGDNCDSIIRRLMKMNRGIKDLSKVKLMRFDDPLLGPRRVPVLGKEYTEKTPISEHAVFNVDLMSKKIHLTENGIRVDIGDTIIYLVH</sequence>
<protein>
    <recommendedName>
        <fullName evidence="12">Leucine--tRNA ligase, cytoplasmic</fullName>
        <ecNumber evidence="5">6.1.1.4</ecNumber>
    </recommendedName>
    <alternativeName>
        <fullName evidence="10">Leucyl-tRNA synthetase</fullName>
        <shortName evidence="10">LeuRS</shortName>
        <shortName evidence="11">cLRS</shortName>
    </alternativeName>
</protein>
<feature type="chain" id="PRO_0000152150" description="Leucine--tRNA ligase, cytoplasmic">
    <location>
        <begin position="1"/>
        <end position="1176"/>
    </location>
</feature>
<feature type="region of interest" description="Editing domain" evidence="13">
    <location>
        <begin position="260"/>
        <end position="509"/>
    </location>
</feature>
<feature type="short sequence motif" description="'HIGH' region" evidence="14 16">
    <location>
        <begin position="60"/>
        <end position="63"/>
    </location>
</feature>
<feature type="short sequence motif" description="'KMSKS' region" evidence="14 16">
    <location>
        <begin position="716"/>
        <end position="720"/>
    </location>
</feature>
<feature type="binding site" evidence="14 16">
    <location>
        <position position="52"/>
    </location>
    <ligand>
        <name>L-leucine</name>
        <dbReference type="ChEBI" id="CHEBI:57427"/>
    </ligand>
</feature>
<feature type="binding site" evidence="14 16">
    <location>
        <position position="54"/>
    </location>
    <ligand>
        <name>L-leucine</name>
        <dbReference type="ChEBI" id="CHEBI:57427"/>
    </ligand>
</feature>
<feature type="binding site" evidence="14 16">
    <location>
        <position position="594"/>
    </location>
    <ligand>
        <name>L-leucine</name>
        <dbReference type="ChEBI" id="CHEBI:57427"/>
    </ligand>
</feature>
<feature type="binding site" evidence="14 16">
    <location>
        <position position="597"/>
    </location>
    <ligand>
        <name>L-leucine</name>
        <dbReference type="ChEBI" id="CHEBI:57427"/>
    </ligand>
</feature>
<feature type="binding site" evidence="1">
    <location>
        <position position="719"/>
    </location>
    <ligand>
        <name>ATP</name>
        <dbReference type="ChEBI" id="CHEBI:30616"/>
    </ligand>
</feature>
<feature type="modified residue" description="Phosphoserine" evidence="17">
    <location>
        <position position="167"/>
    </location>
</feature>
<feature type="modified residue" description="Phosphoserine" evidence="17">
    <location>
        <position position="720"/>
    </location>
</feature>
<feature type="modified residue" description="N6-acetyllysine" evidence="2">
    <location>
        <position position="970"/>
    </location>
</feature>
<feature type="modified residue" description="N6-acetyllysine" evidence="2">
    <location>
        <position position="1047"/>
    </location>
</feature>
<feature type="splice variant" id="VSP_057204" description="In isoform 3." evidence="8 9">
    <location>
        <begin position="1"/>
        <end position="691"/>
    </location>
</feature>
<feature type="splice variant" id="VSP_057205" description="In isoform 2." evidence="8">
    <location>
        <begin position="1"/>
        <end position="54"/>
    </location>
</feature>
<feature type="sequence variant" id="VAR_070437" description="In dbSNP:rs112954500." evidence="4">
    <original>K</original>
    <variation>R</variation>
    <location>
        <position position="82"/>
    </location>
</feature>
<feature type="sequence variant" id="VAR_070438" description="In ILFS1; dbSNP:rs201861847." evidence="4">
    <original>Y</original>
    <variation>C</variation>
    <location>
        <position position="373"/>
    </location>
</feature>
<feature type="sequence variant" id="VAR_052637" description="In dbSNP:rs10988." evidence="7">
    <original>R</original>
    <variation>K</variation>
    <location>
        <position position="1088"/>
    </location>
</feature>
<feature type="mutagenesis site" description="Loss of leucyl-tRNA ligase activity. Decreased activity in post-transfer editing of tRNA(Leu) mischarged with methionine." evidence="5">
    <location>
        <begin position="236"/>
        <end position="256"/>
    </location>
</feature>
<feature type="mutagenesis site" description="Reduced leucyl-tRNA ligase activity." evidence="5">
    <original>P</original>
    <variation>E</variation>
    <location>
        <position position="242"/>
    </location>
</feature>
<feature type="mutagenesis site" description="No effect on leucyl-tRNA ligase activity." evidence="5">
    <original>G</original>
    <variation>A</variation>
    <location>
        <position position="245"/>
    </location>
</feature>
<feature type="mutagenesis site" description="Reduced leucyl-tRNA ligase activity." evidence="5">
    <original>G</original>
    <variation>D</variation>
    <variation>R</variation>
    <location>
        <position position="245"/>
    </location>
</feature>
<feature type="mutagenesis site" description="Loss of leucyl-tRNA ligase activity." evidence="5">
    <original>G</original>
    <variation>P</variation>
    <location>
        <position position="245"/>
    </location>
</feature>
<feature type="mutagenesis site" description="Reduced leucyl-tRNA ligase activity." evidence="5">
    <original>P</original>
    <variation>A</variation>
    <location>
        <position position="247"/>
    </location>
</feature>
<feature type="mutagenesis site" description="Reduced leucyl-tRNA ligase activity. Decreased activity in pre-transfer editing and no effect on post-transfer editing of tRNA(Leu) mischarged with methionine." evidence="5">
    <original>D</original>
    <variation>A</variation>
    <location>
        <position position="250"/>
    </location>
</feature>
<feature type="mutagenesis site" description="No effect on leucyl-tRNA ligase activity." evidence="5">
    <original>D</original>
    <variation>E</variation>
    <location>
        <position position="250"/>
    </location>
</feature>
<feature type="mutagenesis site" description="Reduced leucyl-tRNA ligase activity." evidence="5">
    <original>D</original>
    <variation>N</variation>
    <location>
        <position position="250"/>
    </location>
</feature>
<feature type="mutagenesis site" description="Loss of leucyl-tRNA ligase activity." evidence="5">
    <original>D</original>
    <variation>R</variation>
    <location>
        <position position="250"/>
    </location>
</feature>
<feature type="mutagenesis site" description="Loss of leucyl-tRNA ligase activity. Decreased activity in post-transfer editing of tRNA(Leu) mischarged with methionine." evidence="5">
    <location>
        <begin position="514"/>
        <end position="534"/>
    </location>
</feature>
<feature type="mutagenesis site" description="Reduced leucyl-tRNA ligase activity." evidence="5">
    <original>S</original>
    <variation>G</variation>
    <location>
        <position position="519"/>
    </location>
</feature>
<feature type="mutagenesis site" description="Reduced leucyl-tRNA ligase activity." evidence="5">
    <original>V</original>
    <variation>I</variation>
    <location>
        <position position="523"/>
    </location>
</feature>
<feature type="mutagenesis site" description="Reduced leucyl-tRNA ligase activity." evidence="5">
    <original>A</original>
    <variation>S</variation>
    <location>
        <position position="525"/>
    </location>
</feature>
<feature type="mutagenesis site" description="Reduced leucyl-tRNA ligase activity." evidence="5">
    <original>C</original>
    <variation>E</variation>
    <location>
        <position position="527"/>
    </location>
</feature>
<feature type="sequence conflict" description="In Ref. 1; BAA95667." evidence="12" ref="1">
    <original>V</original>
    <variation>A</variation>
    <location>
        <position position="271"/>
    </location>
</feature>
<feature type="sequence conflict" description="In Ref. 1; BAA95667." evidence="12" ref="1">
    <original>N</original>
    <variation>D</variation>
    <location>
        <position position="892"/>
    </location>
</feature>
<feature type="sequence conflict" description="In Ref. 7; AAI31799." evidence="12" ref="7">
    <original>Y</original>
    <variation>C</variation>
    <location>
        <position position="1026"/>
    </location>
</feature>
<feature type="helix" evidence="22">
    <location>
        <begin position="8"/>
        <end position="27"/>
    </location>
</feature>
<feature type="turn" evidence="22">
    <location>
        <begin position="28"/>
        <end position="30"/>
    </location>
</feature>
<feature type="helix" evidence="22">
    <location>
        <begin position="34"/>
        <end position="37"/>
    </location>
</feature>
<feature type="strand" evidence="22">
    <location>
        <begin position="45"/>
        <end position="49"/>
    </location>
</feature>
<feature type="strand" evidence="19">
    <location>
        <begin position="56"/>
        <end position="58"/>
    </location>
</feature>
<feature type="helix" evidence="22">
    <location>
        <begin position="61"/>
        <end position="79"/>
    </location>
</feature>
<feature type="strand" evidence="22">
    <location>
        <begin position="83"/>
        <end position="85"/>
    </location>
</feature>
<feature type="strand" evidence="20">
    <location>
        <begin position="89"/>
        <end position="91"/>
    </location>
</feature>
<feature type="strand" evidence="20">
    <location>
        <begin position="93"/>
        <end position="95"/>
    </location>
</feature>
<feature type="helix" evidence="22">
    <location>
        <begin position="96"/>
        <end position="110"/>
    </location>
</feature>
<feature type="turn" evidence="19">
    <location>
        <begin position="112"/>
        <end position="115"/>
    </location>
</feature>
<feature type="helix" evidence="22">
    <location>
        <begin position="157"/>
        <end position="163"/>
    </location>
</feature>
<feature type="helix" evidence="22">
    <location>
        <begin position="168"/>
        <end position="171"/>
    </location>
</feature>
<feature type="helix" evidence="22">
    <location>
        <begin position="172"/>
        <end position="175"/>
    </location>
</feature>
<feature type="helix" evidence="22">
    <location>
        <begin position="177"/>
        <end position="195"/>
    </location>
</feature>
<feature type="helix" evidence="22">
    <location>
        <begin position="201"/>
        <end position="203"/>
    </location>
</feature>
<feature type="helix" evidence="22">
    <location>
        <begin position="212"/>
        <end position="227"/>
    </location>
</feature>
<feature type="strand" evidence="22">
    <location>
        <begin position="231"/>
        <end position="241"/>
    </location>
</feature>
<feature type="turn" evidence="22">
    <location>
        <begin position="242"/>
        <end position="245"/>
    </location>
</feature>
<feature type="helix" evidence="19">
    <location>
        <begin position="250"/>
        <end position="252"/>
    </location>
</feature>
<feature type="strand" evidence="22">
    <location>
        <begin position="253"/>
        <end position="255"/>
    </location>
</feature>
<feature type="strand" evidence="22">
    <location>
        <begin position="261"/>
        <end position="271"/>
    </location>
</feature>
<feature type="helix" evidence="22">
    <location>
        <begin position="277"/>
        <end position="282"/>
    </location>
</feature>
<feature type="strand" evidence="22">
    <location>
        <begin position="287"/>
        <end position="294"/>
    </location>
</feature>
<feature type="helix" evidence="22">
    <location>
        <begin position="296"/>
        <end position="301"/>
    </location>
</feature>
<feature type="strand" evidence="22">
    <location>
        <begin position="304"/>
        <end position="307"/>
    </location>
</feature>
<feature type="strand" evidence="22">
    <location>
        <begin position="311"/>
        <end position="317"/>
    </location>
</feature>
<feature type="strand" evidence="19">
    <location>
        <begin position="319"/>
        <end position="321"/>
    </location>
</feature>
<feature type="strand" evidence="22">
    <location>
        <begin position="323"/>
        <end position="326"/>
    </location>
</feature>
<feature type="helix" evidence="22">
    <location>
        <begin position="328"/>
        <end position="336"/>
    </location>
</feature>
<feature type="strand" evidence="22">
    <location>
        <begin position="340"/>
        <end position="342"/>
    </location>
</feature>
<feature type="strand" evidence="22">
    <location>
        <begin position="348"/>
        <end position="353"/>
    </location>
</feature>
<feature type="helix" evidence="22">
    <location>
        <begin position="354"/>
        <end position="357"/>
    </location>
</feature>
<feature type="strand" evidence="22">
    <location>
        <begin position="361"/>
        <end position="363"/>
    </location>
</feature>
<feature type="strand" evidence="18">
    <location>
        <begin position="368"/>
        <end position="370"/>
    </location>
</feature>
<feature type="strand" evidence="22">
    <location>
        <begin position="372"/>
        <end position="376"/>
    </location>
</feature>
<feature type="strand" evidence="22">
    <location>
        <begin position="382"/>
        <end position="384"/>
    </location>
</feature>
<feature type="strand" evidence="22">
    <location>
        <begin position="387"/>
        <end position="391"/>
    </location>
</feature>
<feature type="turn" evidence="22">
    <location>
        <begin position="393"/>
        <end position="395"/>
    </location>
</feature>
<feature type="helix" evidence="22">
    <location>
        <begin position="397"/>
        <end position="408"/>
    </location>
</feature>
<feature type="helix" evidence="22">
    <location>
        <begin position="410"/>
        <end position="415"/>
    </location>
</feature>
<feature type="helix" evidence="22">
    <location>
        <begin position="420"/>
        <end position="422"/>
    </location>
</feature>
<feature type="turn" evidence="22">
    <location>
        <begin position="423"/>
        <end position="425"/>
    </location>
</feature>
<feature type="strand" evidence="22">
    <location>
        <begin position="432"/>
        <end position="434"/>
    </location>
</feature>
<feature type="turn" evidence="22">
    <location>
        <begin position="435"/>
        <end position="437"/>
    </location>
</feature>
<feature type="strand" evidence="22">
    <location>
        <begin position="438"/>
        <end position="440"/>
    </location>
</feature>
<feature type="helix" evidence="22">
    <location>
        <begin position="441"/>
        <end position="448"/>
    </location>
</feature>
<feature type="helix" evidence="22">
    <location>
        <begin position="457"/>
        <end position="466"/>
    </location>
</feature>
<feature type="strand" evidence="21">
    <location>
        <begin position="467"/>
        <end position="469"/>
    </location>
</feature>
<feature type="turn" evidence="22">
    <location>
        <begin position="470"/>
        <end position="472"/>
    </location>
</feature>
<feature type="strand" evidence="20">
    <location>
        <begin position="479"/>
        <end position="482"/>
    </location>
</feature>
<feature type="helix" evidence="22">
    <location>
        <begin position="487"/>
        <end position="489"/>
    </location>
</feature>
<feature type="helix" evidence="22">
    <location>
        <begin position="491"/>
        <end position="500"/>
    </location>
</feature>
<feature type="strand" evidence="22">
    <location>
        <begin position="503"/>
        <end position="512"/>
    </location>
</feature>
<feature type="strand" evidence="21">
    <location>
        <begin position="516"/>
        <end position="519"/>
    </location>
</feature>
<feature type="strand" evidence="22">
    <location>
        <begin position="523"/>
        <end position="533"/>
    </location>
</feature>
<feature type="helix" evidence="22">
    <location>
        <begin position="537"/>
        <end position="549"/>
    </location>
</feature>
<feature type="strand" evidence="22">
    <location>
        <begin position="550"/>
        <end position="554"/>
    </location>
</feature>
<feature type="helix" evidence="22">
    <location>
        <begin position="555"/>
        <end position="567"/>
    </location>
</feature>
<feature type="strand" evidence="22">
    <location>
        <begin position="570"/>
        <end position="572"/>
    </location>
</feature>
<feature type="strand" evidence="22">
    <location>
        <begin position="574"/>
        <end position="580"/>
    </location>
</feature>
<feature type="turn" evidence="22">
    <location>
        <begin position="593"/>
        <end position="595"/>
    </location>
</feature>
<feature type="strand" evidence="22">
    <location>
        <begin position="596"/>
        <end position="599"/>
    </location>
</feature>
<feature type="helix" evidence="22">
    <location>
        <begin position="601"/>
        <end position="610"/>
    </location>
</feature>
<feature type="turn" evidence="22">
    <location>
        <begin position="611"/>
        <end position="613"/>
    </location>
</feature>
<feature type="helix" evidence="19">
    <location>
        <begin position="627"/>
        <end position="629"/>
    </location>
</feature>
<feature type="helix" evidence="22">
    <location>
        <begin position="632"/>
        <end position="639"/>
    </location>
</feature>
<feature type="strand" evidence="21">
    <location>
        <begin position="640"/>
        <end position="643"/>
    </location>
</feature>
<feature type="helix" evidence="22">
    <location>
        <begin position="652"/>
        <end position="665"/>
    </location>
</feature>
<feature type="strand" evidence="22">
    <location>
        <begin position="670"/>
        <end position="674"/>
    </location>
</feature>
<feature type="helix" evidence="22">
    <location>
        <begin position="675"/>
        <end position="677"/>
    </location>
</feature>
<feature type="turn" evidence="22">
    <location>
        <begin position="678"/>
        <end position="680"/>
    </location>
</feature>
<feature type="helix" evidence="22">
    <location>
        <begin position="681"/>
        <end position="692"/>
    </location>
</feature>
<feature type="strand" evidence="19">
    <location>
        <begin position="693"/>
        <end position="695"/>
    </location>
</feature>
<feature type="helix" evidence="22">
    <location>
        <begin position="697"/>
        <end position="699"/>
    </location>
</feature>
<feature type="strand" evidence="22">
    <location>
        <begin position="703"/>
        <end position="707"/>
    </location>
</feature>
<feature type="strand" evidence="22">
    <location>
        <begin position="710"/>
        <end position="712"/>
    </location>
</feature>
<feature type="helix" evidence="22">
    <location>
        <begin position="719"/>
        <end position="721"/>
    </location>
</feature>
<feature type="helix" evidence="22">
    <location>
        <begin position="727"/>
        <end position="744"/>
    </location>
</feature>
<feature type="strand" evidence="22">
    <location>
        <begin position="748"/>
        <end position="751"/>
    </location>
</feature>
<feature type="strand" evidence="22">
    <location>
        <begin position="753"/>
        <end position="755"/>
    </location>
</feature>
<feature type="helix" evidence="22">
    <location>
        <begin position="757"/>
        <end position="779"/>
    </location>
</feature>
<feature type="helix" evidence="23">
    <location>
        <begin position="781"/>
        <end position="783"/>
    </location>
</feature>
<feature type="helix" evidence="22">
    <location>
        <begin position="792"/>
        <end position="813"/>
    </location>
</feature>
<feature type="helix" evidence="22">
    <location>
        <begin position="817"/>
        <end position="824"/>
    </location>
</feature>
<feature type="helix" evidence="22">
    <location>
        <begin position="826"/>
        <end position="838"/>
    </location>
</feature>
<feature type="helix" evidence="22">
    <location>
        <begin position="845"/>
        <end position="859"/>
    </location>
</feature>
<feature type="turn" evidence="22">
    <location>
        <begin position="860"/>
        <end position="862"/>
    </location>
</feature>
<feature type="helix" evidence="22">
    <location>
        <begin position="864"/>
        <end position="873"/>
    </location>
</feature>
<feature type="helix" evidence="22">
    <location>
        <begin position="880"/>
        <end position="882"/>
    </location>
</feature>
<feature type="helix" evidence="22">
    <location>
        <begin position="893"/>
        <end position="912"/>
    </location>
</feature>
<feature type="turn" evidence="21">
    <location>
        <begin position="913"/>
        <end position="915"/>
    </location>
</feature>
<feature type="strand" evidence="22">
    <location>
        <begin position="935"/>
        <end position="939"/>
    </location>
</feature>
<feature type="helix" evidence="22">
    <location>
        <begin position="946"/>
        <end position="961"/>
    </location>
</feature>
<feature type="strand" evidence="21">
    <location>
        <begin position="962"/>
        <end position="964"/>
    </location>
</feature>
<feature type="helix" evidence="22">
    <location>
        <begin position="969"/>
        <end position="977"/>
    </location>
</feature>
<feature type="helix" evidence="22">
    <location>
        <begin position="980"/>
        <end position="985"/>
    </location>
</feature>
<feature type="helix" evidence="22">
    <location>
        <begin position="986"/>
        <end position="1003"/>
    </location>
</feature>
<feature type="helix" evidence="22">
    <location>
        <begin position="1004"/>
        <end position="1008"/>
    </location>
</feature>
<feature type="strand" evidence="20">
    <location>
        <begin position="1009"/>
        <end position="1011"/>
    </location>
</feature>
<feature type="helix" evidence="22">
    <location>
        <begin position="1016"/>
        <end position="1021"/>
    </location>
</feature>
<feature type="helix" evidence="22">
    <location>
        <begin position="1024"/>
        <end position="1031"/>
    </location>
</feature>
<feature type="strand" evidence="22">
    <location>
        <begin position="1034"/>
        <end position="1039"/>
    </location>
</feature>
<feature type="strand" evidence="22">
    <location>
        <begin position="1041"/>
        <end position="1044"/>
    </location>
</feature>
<feature type="helix" evidence="22">
    <location>
        <begin position="1046"/>
        <end position="1051"/>
    </location>
</feature>
<feature type="strand" evidence="22">
    <location>
        <begin position="1058"/>
        <end position="1060"/>
    </location>
</feature>
<dbReference type="EC" id="6.1.1.4" evidence="5"/>
<dbReference type="EMBL" id="D84223">
    <property type="protein sequence ID" value="BAA95667.1"/>
    <property type="molecule type" value="mRNA"/>
</dbReference>
<dbReference type="EMBL" id="AB037773">
    <property type="protein sequence ID" value="BAA92590.1"/>
    <property type="status" value="ALT_INIT"/>
    <property type="molecule type" value="mRNA"/>
</dbReference>
<dbReference type="EMBL" id="AY513284">
    <property type="protein sequence ID" value="AAT08037.1"/>
    <property type="molecule type" value="mRNA"/>
</dbReference>
<dbReference type="EMBL" id="AY926480">
    <property type="protein sequence ID" value="AAX10025.1"/>
    <property type="molecule type" value="mRNA"/>
</dbReference>
<dbReference type="EMBL" id="AK295874">
    <property type="protein sequence ID" value="BAG58672.1"/>
    <property type="molecule type" value="mRNA"/>
</dbReference>
<dbReference type="EMBL" id="AC091887">
    <property type="status" value="NOT_ANNOTATED_CDS"/>
    <property type="molecule type" value="Genomic_DNA"/>
</dbReference>
<dbReference type="EMBL" id="AC091959">
    <property type="status" value="NOT_ANNOTATED_CDS"/>
    <property type="molecule type" value="Genomic_DNA"/>
</dbReference>
<dbReference type="EMBL" id="CH471062">
    <property type="protein sequence ID" value="EAW61848.1"/>
    <property type="molecule type" value="Genomic_DNA"/>
</dbReference>
<dbReference type="EMBL" id="BC131798">
    <property type="protein sequence ID" value="AAI31799.1"/>
    <property type="molecule type" value="mRNA"/>
</dbReference>
<dbReference type="EMBL" id="BC150213">
    <property type="protein sequence ID" value="AAI50214.1"/>
    <property type="molecule type" value="mRNA"/>
</dbReference>
<dbReference type="EMBL" id="BC151214">
    <property type="protein sequence ID" value="AAI51215.1"/>
    <property type="molecule type" value="mRNA"/>
</dbReference>
<dbReference type="EMBL" id="BC152422">
    <property type="protein sequence ID" value="AAI52423.1"/>
    <property type="molecule type" value="mRNA"/>
</dbReference>
<dbReference type="CCDS" id="CCDS34265.1">
    <molecule id="Q9P2J5-1"/>
</dbReference>
<dbReference type="CCDS" id="CCDS83029.1">
    <molecule id="Q9P2J5-2"/>
</dbReference>
<dbReference type="RefSeq" id="NP_001304893.1">
    <property type="nucleotide sequence ID" value="NM_001317964.1"/>
</dbReference>
<dbReference type="RefSeq" id="NP_001304894.1">
    <molecule id="Q9P2J5-2"/>
    <property type="nucleotide sequence ID" value="NM_001317965.2"/>
</dbReference>
<dbReference type="RefSeq" id="NP_057544.2">
    <property type="nucleotide sequence ID" value="NM_016460.3"/>
</dbReference>
<dbReference type="RefSeq" id="NP_064502.9">
    <molecule id="Q9P2J5-1"/>
    <property type="nucleotide sequence ID" value="NM_020117.10"/>
</dbReference>
<dbReference type="RefSeq" id="XP_011535958.1">
    <molecule id="Q9P2J5-2"/>
    <property type="nucleotide sequence ID" value="XM_011537656.4"/>
</dbReference>
<dbReference type="PDB" id="2WFD">
    <property type="method" value="X-ray"/>
    <property type="resolution" value="3.25 A"/>
    <property type="chains" value="A/B=260-509"/>
</dbReference>
<dbReference type="PDB" id="6KID">
    <property type="method" value="X-ray"/>
    <property type="resolution" value="3.15 A"/>
    <property type="chains" value="A=1-1176"/>
</dbReference>
<dbReference type="PDB" id="6KIE">
    <property type="method" value="X-ray"/>
    <property type="resolution" value="3.15 A"/>
    <property type="chains" value="A=1-1061"/>
</dbReference>
<dbReference type="PDB" id="6KQY">
    <property type="method" value="X-ray"/>
    <property type="resolution" value="3.30 A"/>
    <property type="chains" value="A=1-1176"/>
</dbReference>
<dbReference type="PDB" id="6KR7">
    <property type="method" value="X-ray"/>
    <property type="resolution" value="4.00 A"/>
    <property type="chains" value="A=1-1176"/>
</dbReference>
<dbReference type="PDB" id="6LPF">
    <property type="method" value="X-ray"/>
    <property type="resolution" value="2.49 A"/>
    <property type="chains" value="A/B=1-1070"/>
</dbReference>
<dbReference type="PDB" id="6LR6">
    <property type="method" value="X-ray"/>
    <property type="resolution" value="3.01 A"/>
    <property type="chains" value="A/B=1-1070"/>
</dbReference>
<dbReference type="PDBsum" id="2WFD"/>
<dbReference type="PDBsum" id="6KID"/>
<dbReference type="PDBsum" id="6KIE"/>
<dbReference type="PDBsum" id="6KQY"/>
<dbReference type="PDBsum" id="6KR7"/>
<dbReference type="PDBsum" id="6LPF"/>
<dbReference type="PDBsum" id="6LR6"/>
<dbReference type="SMR" id="Q9P2J5"/>
<dbReference type="BioGRID" id="119584">
    <property type="interactions" value="379"/>
</dbReference>
<dbReference type="ComplexPortal" id="CPX-2469">
    <property type="entry name" value="Multiaminoacyl-tRNA synthetase complex"/>
</dbReference>
<dbReference type="CORUM" id="Q9P2J5"/>
<dbReference type="FunCoup" id="Q9P2J5">
    <property type="interactions" value="3506"/>
</dbReference>
<dbReference type="IntAct" id="Q9P2J5">
    <property type="interactions" value="89"/>
</dbReference>
<dbReference type="MINT" id="Q9P2J5"/>
<dbReference type="STRING" id="9606.ENSP00000377954"/>
<dbReference type="BindingDB" id="Q9P2J5"/>
<dbReference type="ChEMBL" id="CHEMBL3258"/>
<dbReference type="DrugBank" id="DB00149">
    <property type="generic name" value="Leucine"/>
</dbReference>
<dbReference type="MoonProt" id="Q9P2J5"/>
<dbReference type="GlyCosmos" id="Q9P2J5">
    <property type="glycosylation" value="3 sites, 1 glycan"/>
</dbReference>
<dbReference type="GlyGen" id="Q9P2J5">
    <property type="glycosylation" value="7 sites, 1 O-linked glycan (7 sites)"/>
</dbReference>
<dbReference type="iPTMnet" id="Q9P2J5"/>
<dbReference type="MetOSite" id="Q9P2J5"/>
<dbReference type="PhosphoSitePlus" id="Q9P2J5"/>
<dbReference type="SwissPalm" id="Q9P2J5"/>
<dbReference type="BioMuta" id="LARS"/>
<dbReference type="DMDM" id="48428689"/>
<dbReference type="jPOST" id="Q9P2J5"/>
<dbReference type="MassIVE" id="Q9P2J5"/>
<dbReference type="PaxDb" id="9606-ENSP00000377954"/>
<dbReference type="PeptideAtlas" id="Q9P2J5"/>
<dbReference type="ProteomicsDB" id="4339"/>
<dbReference type="ProteomicsDB" id="83822">
    <molecule id="Q9P2J5-1"/>
</dbReference>
<dbReference type="Pumba" id="Q9P2J5"/>
<dbReference type="ABCD" id="Q9P2J5">
    <property type="antibodies" value="2 sequenced antibodies"/>
</dbReference>
<dbReference type="Antibodypedia" id="45640">
    <property type="antibodies" value="117 antibodies from 31 providers"/>
</dbReference>
<dbReference type="DNASU" id="51520"/>
<dbReference type="Ensembl" id="ENST00000394434.7">
    <molecule id="Q9P2J5-1"/>
    <property type="protein sequence ID" value="ENSP00000377954.2"/>
    <property type="gene ID" value="ENSG00000133706.20"/>
</dbReference>
<dbReference type="Ensembl" id="ENST00000510191.5">
    <molecule id="Q9P2J5-2"/>
    <property type="protein sequence ID" value="ENSP00000426005.1"/>
    <property type="gene ID" value="ENSG00000133706.20"/>
</dbReference>
<dbReference type="Ensembl" id="ENST00000674174.1">
    <molecule id="Q9P2J5-2"/>
    <property type="protein sequence ID" value="ENSP00000501434.1"/>
    <property type="gene ID" value="ENSG00000133706.20"/>
</dbReference>
<dbReference type="GeneID" id="51520"/>
<dbReference type="KEGG" id="hsa:51520"/>
<dbReference type="MANE-Select" id="ENST00000394434.7">
    <property type="protein sequence ID" value="ENSP00000377954.2"/>
    <property type="RefSeq nucleotide sequence ID" value="NM_020117.11"/>
    <property type="RefSeq protein sequence ID" value="NP_064502.9"/>
</dbReference>
<dbReference type="UCSC" id="uc003lnx.2">
    <molecule id="Q9P2J5-1"/>
    <property type="organism name" value="human"/>
</dbReference>
<dbReference type="AGR" id="HGNC:6512"/>
<dbReference type="CTD" id="51520"/>
<dbReference type="DisGeNET" id="51520"/>
<dbReference type="GeneCards" id="LARS1"/>
<dbReference type="HGNC" id="HGNC:6512">
    <property type="gene designation" value="LARS1"/>
</dbReference>
<dbReference type="HPA" id="ENSG00000133706">
    <property type="expression patterns" value="Low tissue specificity"/>
</dbReference>
<dbReference type="MalaCards" id="LARS1"/>
<dbReference type="MIM" id="151350">
    <property type="type" value="gene"/>
</dbReference>
<dbReference type="MIM" id="615438">
    <property type="type" value="phenotype"/>
</dbReference>
<dbReference type="neXtProt" id="NX_Q9P2J5"/>
<dbReference type="OpenTargets" id="ENSG00000133706"/>
<dbReference type="Orphanet" id="370088">
    <property type="disease" value="Acute infantile liver failure-multisystemic involvement syndrome"/>
</dbReference>
<dbReference type="PharmGKB" id="PA30297"/>
<dbReference type="VEuPathDB" id="HostDB:ENSG00000133706"/>
<dbReference type="eggNOG" id="KOG0437">
    <property type="taxonomic scope" value="Eukaryota"/>
</dbReference>
<dbReference type="GeneTree" id="ENSGT00390000012163"/>
<dbReference type="HOGENOM" id="CLU_004174_2_1_1"/>
<dbReference type="InParanoid" id="Q9P2J5"/>
<dbReference type="OMA" id="KFIEWQF"/>
<dbReference type="OrthoDB" id="10249672at2759"/>
<dbReference type="PAN-GO" id="Q9P2J5">
    <property type="GO annotations" value="2 GO annotations based on evolutionary models"/>
</dbReference>
<dbReference type="PhylomeDB" id="Q9P2J5"/>
<dbReference type="TreeFam" id="TF105718"/>
<dbReference type="BRENDA" id="6.1.1.4">
    <property type="organism ID" value="2681"/>
</dbReference>
<dbReference type="PathwayCommons" id="Q9P2J5"/>
<dbReference type="Reactome" id="R-HSA-2408522">
    <property type="pathway name" value="Selenoamino acid metabolism"/>
</dbReference>
<dbReference type="Reactome" id="R-HSA-379716">
    <property type="pathway name" value="Cytosolic tRNA aminoacylation"/>
</dbReference>
<dbReference type="Reactome" id="R-HSA-9856649">
    <property type="pathway name" value="Transcriptional and post-translational regulation of MITF-M expression and activity"/>
</dbReference>
<dbReference type="SABIO-RK" id="Q9P2J5"/>
<dbReference type="SignaLink" id="Q9P2J5"/>
<dbReference type="SIGNOR" id="Q9P2J5"/>
<dbReference type="BioGRID-ORCS" id="51520">
    <property type="hits" value="807 hits in 1159 CRISPR screens"/>
</dbReference>
<dbReference type="ChiTaRS" id="LARS">
    <property type="organism name" value="human"/>
</dbReference>
<dbReference type="EvolutionaryTrace" id="Q9P2J5"/>
<dbReference type="GeneWiki" id="Leucyl-tRNA_synthetase"/>
<dbReference type="GenomeRNAi" id="51520"/>
<dbReference type="Pharos" id="Q9P2J5">
    <property type="development level" value="Tchem"/>
</dbReference>
<dbReference type="PRO" id="PR:Q9P2J5"/>
<dbReference type="Proteomes" id="UP000005640">
    <property type="component" value="Chromosome 5"/>
</dbReference>
<dbReference type="RNAct" id="Q9P2J5">
    <property type="molecule type" value="protein"/>
</dbReference>
<dbReference type="Bgee" id="ENSG00000133706">
    <property type="expression patterns" value="Expressed in Brodmann (1909) area 23 and 211 other cell types or tissues"/>
</dbReference>
<dbReference type="ExpressionAtlas" id="Q9P2J5">
    <property type="expression patterns" value="baseline and differential"/>
</dbReference>
<dbReference type="GO" id="GO:0017101">
    <property type="term" value="C:aminoacyl-tRNA synthetase multienzyme complex"/>
    <property type="evidence" value="ECO:0000314"/>
    <property type="project" value="UniProtKB"/>
</dbReference>
<dbReference type="GO" id="GO:0005737">
    <property type="term" value="C:cytoplasm"/>
    <property type="evidence" value="ECO:0000314"/>
    <property type="project" value="CAFA"/>
</dbReference>
<dbReference type="GO" id="GO:0005829">
    <property type="term" value="C:cytosol"/>
    <property type="evidence" value="ECO:0000314"/>
    <property type="project" value="HPA"/>
</dbReference>
<dbReference type="GO" id="GO:0012505">
    <property type="term" value="C:endomembrane system"/>
    <property type="evidence" value="ECO:0000314"/>
    <property type="project" value="CAFA"/>
</dbReference>
<dbReference type="GO" id="GO:0005783">
    <property type="term" value="C:endoplasmic reticulum"/>
    <property type="evidence" value="ECO:0000314"/>
    <property type="project" value="CAFA"/>
</dbReference>
<dbReference type="GO" id="GO:0005764">
    <property type="term" value="C:lysosome"/>
    <property type="evidence" value="ECO:0000315"/>
    <property type="project" value="CAFA"/>
</dbReference>
<dbReference type="GO" id="GO:0016604">
    <property type="term" value="C:nuclear body"/>
    <property type="evidence" value="ECO:0000314"/>
    <property type="project" value="HPA"/>
</dbReference>
<dbReference type="GO" id="GO:0002161">
    <property type="term" value="F:aminoacyl-tRNA deacylase activity"/>
    <property type="evidence" value="ECO:0000314"/>
    <property type="project" value="UniProtKB"/>
</dbReference>
<dbReference type="GO" id="GO:0005524">
    <property type="term" value="F:ATP binding"/>
    <property type="evidence" value="ECO:0007669"/>
    <property type="project" value="UniProtKB-KW"/>
</dbReference>
<dbReference type="GO" id="GO:0004819">
    <property type="term" value="F:glutamine-tRNA ligase activity"/>
    <property type="evidence" value="ECO:0000314"/>
    <property type="project" value="UniProtKB"/>
</dbReference>
<dbReference type="GO" id="GO:0005096">
    <property type="term" value="F:GTPase activator activity"/>
    <property type="evidence" value="ECO:0000315"/>
    <property type="project" value="CAFA"/>
</dbReference>
<dbReference type="GO" id="GO:0004823">
    <property type="term" value="F:leucine-tRNA ligase activity"/>
    <property type="evidence" value="ECO:0000314"/>
    <property type="project" value="UniProtKB"/>
</dbReference>
<dbReference type="GO" id="GO:0034198">
    <property type="term" value="P:cellular response to amino acid starvation"/>
    <property type="evidence" value="ECO:0000315"/>
    <property type="project" value="CAFA"/>
</dbReference>
<dbReference type="GO" id="GO:0071230">
    <property type="term" value="P:cellular response to amino acid stimulus"/>
    <property type="evidence" value="ECO:0000315"/>
    <property type="project" value="CAFA"/>
</dbReference>
<dbReference type="GO" id="GO:0071233">
    <property type="term" value="P:cellular response to L-leucine"/>
    <property type="evidence" value="ECO:0000315"/>
    <property type="project" value="CAFA"/>
</dbReference>
<dbReference type="GO" id="GO:1990253">
    <property type="term" value="P:cellular response to leucine starvation"/>
    <property type="evidence" value="ECO:0000315"/>
    <property type="project" value="CAFA"/>
</dbReference>
<dbReference type="GO" id="GO:0006425">
    <property type="term" value="P:glutaminyl-tRNA aminoacylation"/>
    <property type="evidence" value="ECO:0000314"/>
    <property type="project" value="UniProtKB"/>
</dbReference>
<dbReference type="GO" id="GO:0006429">
    <property type="term" value="P:leucyl-tRNA aminoacylation"/>
    <property type="evidence" value="ECO:0000314"/>
    <property type="project" value="UniProtKB"/>
</dbReference>
<dbReference type="GO" id="GO:0043547">
    <property type="term" value="P:positive regulation of GTPase activity"/>
    <property type="evidence" value="ECO:0000315"/>
    <property type="project" value="CAFA"/>
</dbReference>
<dbReference type="GO" id="GO:0032008">
    <property type="term" value="P:positive regulation of TOR signaling"/>
    <property type="evidence" value="ECO:0000315"/>
    <property type="project" value="CAFA"/>
</dbReference>
<dbReference type="GO" id="GO:1904263">
    <property type="term" value="P:positive regulation of TORC1 signaling"/>
    <property type="evidence" value="ECO:0000315"/>
    <property type="project" value="CAFA"/>
</dbReference>
<dbReference type="GO" id="GO:0008361">
    <property type="term" value="P:regulation of cell size"/>
    <property type="evidence" value="ECO:0000315"/>
    <property type="project" value="CAFA"/>
</dbReference>
<dbReference type="GO" id="GO:0006418">
    <property type="term" value="P:tRNA aminoacylation for protein translation"/>
    <property type="evidence" value="ECO:0000304"/>
    <property type="project" value="Reactome"/>
</dbReference>
<dbReference type="CDD" id="cd07959">
    <property type="entry name" value="Anticodon_Ia_Leu_AEc"/>
    <property type="match status" value="1"/>
</dbReference>
<dbReference type="FunFam" id="3.40.50.620:FF:000326">
    <property type="entry name" value="Leucine--tRNA ligase, cytoplasmic"/>
    <property type="match status" value="1"/>
</dbReference>
<dbReference type="FunFam" id="3.90.740.10:FF:000001">
    <property type="entry name" value="Leucine--tRNA ligase, cytoplasmic"/>
    <property type="match status" value="1"/>
</dbReference>
<dbReference type="FunFam" id="1.10.730.10:FF:000013">
    <property type="entry name" value="leucine--tRNA ligase, cytoplasmic"/>
    <property type="match status" value="1"/>
</dbReference>
<dbReference type="Gene3D" id="3.40.50.620">
    <property type="entry name" value="HUPs"/>
    <property type="match status" value="1"/>
</dbReference>
<dbReference type="Gene3D" id="1.10.730.10">
    <property type="entry name" value="Isoleucyl-tRNA Synthetase, Domain 1"/>
    <property type="match status" value="1"/>
</dbReference>
<dbReference type="Gene3D" id="3.90.740.10">
    <property type="entry name" value="Valyl/Leucyl/Isoleucyl-tRNA synthetase, editing domain"/>
    <property type="match status" value="1"/>
</dbReference>
<dbReference type="InterPro" id="IPR001412">
    <property type="entry name" value="aa-tRNA-synth_I_CS"/>
</dbReference>
<dbReference type="InterPro" id="IPR002300">
    <property type="entry name" value="aa-tRNA-synth_Ia"/>
</dbReference>
<dbReference type="InterPro" id="IPR054509">
    <property type="entry name" value="LARS1_ULD"/>
</dbReference>
<dbReference type="InterPro" id="IPR004493">
    <property type="entry name" value="Leu-tRNA-synth_Ia_arc/euk"/>
</dbReference>
<dbReference type="InterPro" id="IPR013155">
    <property type="entry name" value="M/V/L/I-tRNA-synth_anticd-bd"/>
</dbReference>
<dbReference type="InterPro" id="IPR055416">
    <property type="entry name" value="RBD_LARS1"/>
</dbReference>
<dbReference type="InterPro" id="IPR014729">
    <property type="entry name" value="Rossmann-like_a/b/a_fold"/>
</dbReference>
<dbReference type="InterPro" id="IPR009080">
    <property type="entry name" value="tRNAsynth_Ia_anticodon-bd"/>
</dbReference>
<dbReference type="InterPro" id="IPR009008">
    <property type="entry name" value="Val/Leu/Ile-tRNA-synth_edit"/>
</dbReference>
<dbReference type="NCBIfam" id="TIGR00395">
    <property type="entry name" value="leuS_arch"/>
    <property type="match status" value="1"/>
</dbReference>
<dbReference type="NCBIfam" id="NF008957">
    <property type="entry name" value="PRK12300.1"/>
    <property type="match status" value="1"/>
</dbReference>
<dbReference type="PANTHER" id="PTHR45794:SF1">
    <property type="entry name" value="LEUCINE--TRNA LIGASE, CYTOPLASMIC"/>
    <property type="match status" value="1"/>
</dbReference>
<dbReference type="PANTHER" id="PTHR45794">
    <property type="entry name" value="LEUCYL-TRNA SYNTHETASE"/>
    <property type="match status" value="1"/>
</dbReference>
<dbReference type="Pfam" id="PF08264">
    <property type="entry name" value="Anticodon_1"/>
    <property type="match status" value="1"/>
</dbReference>
<dbReference type="Pfam" id="PF24810">
    <property type="entry name" value="RBD_LARS1"/>
    <property type="match status" value="1"/>
</dbReference>
<dbReference type="Pfam" id="PF00133">
    <property type="entry name" value="tRNA-synt_1"/>
    <property type="match status" value="2"/>
</dbReference>
<dbReference type="Pfam" id="PF22947">
    <property type="entry name" value="ULD_3"/>
    <property type="match status" value="1"/>
</dbReference>
<dbReference type="SUPFAM" id="SSF47323">
    <property type="entry name" value="Anticodon-binding domain of a subclass of class I aminoacyl-tRNA synthetases"/>
    <property type="match status" value="1"/>
</dbReference>
<dbReference type="SUPFAM" id="SSF52374">
    <property type="entry name" value="Nucleotidylyl transferase"/>
    <property type="match status" value="1"/>
</dbReference>
<dbReference type="SUPFAM" id="SSF50677">
    <property type="entry name" value="ValRS/IleRS/LeuRS editing domain"/>
    <property type="match status" value="1"/>
</dbReference>
<dbReference type="PROSITE" id="PS00178">
    <property type="entry name" value="AA_TRNA_LIGASE_I"/>
    <property type="match status" value="1"/>
</dbReference>